<sequence>MENFDKTMKFDYEELPTQDVRDVLNNVYRTLDERGYNAVNQIVGYLLSGDPAYIPRQNEARNQIRHIDRDVIMEELVSYYLKEQNK</sequence>
<organism>
    <name type="scientific">Staphylococcus aureus (strain JH1)</name>
    <dbReference type="NCBI Taxonomy" id="359787"/>
    <lineage>
        <taxon>Bacteria</taxon>
        <taxon>Bacillati</taxon>
        <taxon>Bacillota</taxon>
        <taxon>Bacilli</taxon>
        <taxon>Bacillales</taxon>
        <taxon>Staphylococcaceae</taxon>
        <taxon>Staphylococcus</taxon>
    </lineage>
</organism>
<accession>A6U286</accession>
<protein>
    <recommendedName>
        <fullName evidence="1">UPF0297 protein SaurJH1_1708</fullName>
    </recommendedName>
</protein>
<comment type="similarity">
    <text evidence="1">Belongs to the UPF0297 family.</text>
</comment>
<feature type="chain" id="PRO_1000087520" description="UPF0297 protein SaurJH1_1708">
    <location>
        <begin position="1"/>
        <end position="86"/>
    </location>
</feature>
<dbReference type="EMBL" id="CP000736">
    <property type="protein sequence ID" value="ABR52554.1"/>
    <property type="molecule type" value="Genomic_DNA"/>
</dbReference>
<dbReference type="SMR" id="A6U286"/>
<dbReference type="KEGG" id="sah:SaurJH1_1708"/>
<dbReference type="HOGENOM" id="CLU_162466_0_0_9"/>
<dbReference type="HAMAP" id="MF_01507">
    <property type="entry name" value="UPF0297"/>
    <property type="match status" value="1"/>
</dbReference>
<dbReference type="InterPro" id="IPR009309">
    <property type="entry name" value="IreB"/>
</dbReference>
<dbReference type="NCBIfam" id="NF003997">
    <property type="entry name" value="PRK05473.1"/>
    <property type="match status" value="1"/>
</dbReference>
<dbReference type="PANTHER" id="PTHR40067">
    <property type="entry name" value="UPF0297 PROTEIN YRZL"/>
    <property type="match status" value="1"/>
</dbReference>
<dbReference type="PANTHER" id="PTHR40067:SF1">
    <property type="entry name" value="UPF0297 PROTEIN YRZL"/>
    <property type="match status" value="1"/>
</dbReference>
<dbReference type="Pfam" id="PF06135">
    <property type="entry name" value="IreB"/>
    <property type="match status" value="1"/>
</dbReference>
<dbReference type="PIRSF" id="PIRSF037258">
    <property type="entry name" value="DUF965_bac"/>
    <property type="match status" value="1"/>
</dbReference>
<name>Y1708_STAA2</name>
<proteinExistence type="inferred from homology"/>
<gene>
    <name type="ordered locus">SaurJH1_1708</name>
</gene>
<reference key="1">
    <citation type="submission" date="2007-06" db="EMBL/GenBank/DDBJ databases">
        <title>Complete sequence of chromosome of Staphylococcus aureus subsp. aureus JH1.</title>
        <authorList>
            <consortium name="US DOE Joint Genome Institute"/>
            <person name="Copeland A."/>
            <person name="Lucas S."/>
            <person name="Lapidus A."/>
            <person name="Barry K."/>
            <person name="Detter J.C."/>
            <person name="Glavina del Rio T."/>
            <person name="Hammon N."/>
            <person name="Israni S."/>
            <person name="Dalin E."/>
            <person name="Tice H."/>
            <person name="Pitluck S."/>
            <person name="Chain P."/>
            <person name="Malfatti S."/>
            <person name="Shin M."/>
            <person name="Vergez L."/>
            <person name="Schmutz J."/>
            <person name="Larimer F."/>
            <person name="Land M."/>
            <person name="Hauser L."/>
            <person name="Kyrpides N."/>
            <person name="Ivanova N."/>
            <person name="Tomasz A."/>
            <person name="Richardson P."/>
        </authorList>
    </citation>
    <scope>NUCLEOTIDE SEQUENCE [LARGE SCALE GENOMIC DNA]</scope>
    <source>
        <strain>JH1</strain>
    </source>
</reference>
<evidence type="ECO:0000255" key="1">
    <source>
        <dbReference type="HAMAP-Rule" id="MF_01507"/>
    </source>
</evidence>